<comment type="function">
    <text>The epsilon chain is a beta-type chain of early mammalian embryonic hemoglobin.</text>
</comment>
<comment type="subunit">
    <text>Heterotetramer of two alpha chains and two epsilon chains in early embryonic hemoglobin Gower-2; two zeta chains and two epsilon chains in early embryonic hemoglobin Gower-1.</text>
</comment>
<comment type="tissue specificity">
    <text>Red blood cells.</text>
</comment>
<comment type="similarity">
    <text evidence="2">Belongs to the globin family.</text>
</comment>
<reference key="1">
    <citation type="journal article" date="1992" name="Science">
        <title>Rejection of the 'flying primate' hypothesis by phylogenetic evidence from the epsilon-globin gene.</title>
        <authorList>
            <person name="Bailey W.J."/>
            <person name="Slightom J.L."/>
            <person name="Goodman M."/>
        </authorList>
    </citation>
    <scope>NUCLEOTIDE SEQUENCE [GENOMIC DNA]</scope>
    <source>
        <tissue>Liver</tissue>
    </source>
</reference>
<reference key="2">
    <citation type="journal article" date="1993" name="Science">
        <authorList>
            <person name="Bailey W.J."/>
            <person name="Slightom J.L."/>
            <person name="Goodman M."/>
        </authorList>
    </citation>
    <scope>ERRATUM OF PUBMED:1301735</scope>
</reference>
<name>HBE_PANTR</name>
<gene>
    <name type="primary">HBE1</name>
</gene>
<accession>Q6LDH1</accession>
<sequence length="147" mass="16203">MVHFTAEEKAAVTSLWSKMNVEEAGGEALGRLLVVYPWTQRFFDSFGNLSSPSAILGNPKVKAHGKKVLTSFGDAIKNMDNLKPAFAKLSELHCDKLHVDPENFKLLGNVMVIILATHFGKEFTPEVQAAWQKLVSAVAIALAHKYH</sequence>
<organism>
    <name type="scientific">Pan troglodytes</name>
    <name type="common">Chimpanzee</name>
    <dbReference type="NCBI Taxonomy" id="9598"/>
    <lineage>
        <taxon>Eukaryota</taxon>
        <taxon>Metazoa</taxon>
        <taxon>Chordata</taxon>
        <taxon>Craniata</taxon>
        <taxon>Vertebrata</taxon>
        <taxon>Euteleostomi</taxon>
        <taxon>Mammalia</taxon>
        <taxon>Eutheria</taxon>
        <taxon>Euarchontoglires</taxon>
        <taxon>Primates</taxon>
        <taxon>Haplorrhini</taxon>
        <taxon>Catarrhini</taxon>
        <taxon>Hominidae</taxon>
        <taxon>Pan</taxon>
    </lineage>
</organism>
<dbReference type="EMBL" id="M81361">
    <property type="protein sequence ID" value="AAA70195.1"/>
    <property type="molecule type" value="Genomic_DNA"/>
</dbReference>
<dbReference type="RefSeq" id="NP_001129304.1">
    <property type="nucleotide sequence ID" value="NM_001135832.1"/>
</dbReference>
<dbReference type="RefSeq" id="XP_054516990.1">
    <property type="nucleotide sequence ID" value="XM_054661015.1"/>
</dbReference>
<dbReference type="SMR" id="Q6LDH1"/>
<dbReference type="FunCoup" id="Q6LDH1">
    <property type="interactions" value="18"/>
</dbReference>
<dbReference type="STRING" id="9598.ENSPTRP00000005708"/>
<dbReference type="PaxDb" id="9598-ENSPTRP00000005708"/>
<dbReference type="Ensembl" id="ENSPTRT00000006185.4">
    <property type="protein sequence ID" value="ENSPTRP00000005708.3"/>
    <property type="gene ID" value="ENSPTRG00000022526.5"/>
</dbReference>
<dbReference type="GeneID" id="100190972"/>
<dbReference type="KEGG" id="ptr:100190972"/>
<dbReference type="CTD" id="3046"/>
<dbReference type="VGNC" id="VGNC:3254">
    <property type="gene designation" value="HBE1"/>
</dbReference>
<dbReference type="eggNOG" id="KOG3378">
    <property type="taxonomic scope" value="Eukaryota"/>
</dbReference>
<dbReference type="GeneTree" id="ENSGT00940000157809"/>
<dbReference type="HOGENOM" id="CLU_003827_10_0_1"/>
<dbReference type="InParanoid" id="Q6LDH1"/>
<dbReference type="OMA" id="ICGNPQV"/>
<dbReference type="OrthoDB" id="1667at9604"/>
<dbReference type="TreeFam" id="TF333268"/>
<dbReference type="Proteomes" id="UP000002277">
    <property type="component" value="Chromosome 11"/>
</dbReference>
<dbReference type="Bgee" id="ENSPTRG00000022526">
    <property type="expression patterns" value="Expressed in bone marrow and 9 other cell types or tissues"/>
</dbReference>
<dbReference type="GO" id="GO:0031838">
    <property type="term" value="C:haptoglobin-hemoglobin complex"/>
    <property type="evidence" value="ECO:0000318"/>
    <property type="project" value="GO_Central"/>
</dbReference>
<dbReference type="GO" id="GO:0005833">
    <property type="term" value="C:hemoglobin complex"/>
    <property type="evidence" value="ECO:0000318"/>
    <property type="project" value="GO_Central"/>
</dbReference>
<dbReference type="GO" id="GO:0020037">
    <property type="term" value="F:heme binding"/>
    <property type="evidence" value="ECO:0000318"/>
    <property type="project" value="GO_Central"/>
</dbReference>
<dbReference type="GO" id="GO:0031721">
    <property type="term" value="F:hemoglobin alpha binding"/>
    <property type="evidence" value="ECO:0000318"/>
    <property type="project" value="GO_Central"/>
</dbReference>
<dbReference type="GO" id="GO:0046872">
    <property type="term" value="F:metal ion binding"/>
    <property type="evidence" value="ECO:0007669"/>
    <property type="project" value="UniProtKB-KW"/>
</dbReference>
<dbReference type="GO" id="GO:0019825">
    <property type="term" value="F:oxygen binding"/>
    <property type="evidence" value="ECO:0000318"/>
    <property type="project" value="GO_Central"/>
</dbReference>
<dbReference type="GO" id="GO:0005344">
    <property type="term" value="F:oxygen carrier activity"/>
    <property type="evidence" value="ECO:0000318"/>
    <property type="project" value="GO_Central"/>
</dbReference>
<dbReference type="GO" id="GO:0098869">
    <property type="term" value="P:cellular oxidant detoxification"/>
    <property type="evidence" value="ECO:0007669"/>
    <property type="project" value="GOC"/>
</dbReference>
<dbReference type="GO" id="GO:0042744">
    <property type="term" value="P:hydrogen peroxide catabolic process"/>
    <property type="evidence" value="ECO:0000318"/>
    <property type="project" value="GO_Central"/>
</dbReference>
<dbReference type="CDD" id="cd08925">
    <property type="entry name" value="Hb-beta-like"/>
    <property type="match status" value="1"/>
</dbReference>
<dbReference type="FunFam" id="1.10.490.10:FF:000001">
    <property type="entry name" value="Hemoglobin subunit beta"/>
    <property type="match status" value="1"/>
</dbReference>
<dbReference type="Gene3D" id="1.10.490.10">
    <property type="entry name" value="Globins"/>
    <property type="match status" value="1"/>
</dbReference>
<dbReference type="InterPro" id="IPR000971">
    <property type="entry name" value="Globin"/>
</dbReference>
<dbReference type="InterPro" id="IPR009050">
    <property type="entry name" value="Globin-like_sf"/>
</dbReference>
<dbReference type="InterPro" id="IPR012292">
    <property type="entry name" value="Globin/Proto"/>
</dbReference>
<dbReference type="InterPro" id="IPR002337">
    <property type="entry name" value="Hemoglobin_b"/>
</dbReference>
<dbReference type="InterPro" id="IPR050056">
    <property type="entry name" value="Hemoglobin_oxygen_transport"/>
</dbReference>
<dbReference type="PANTHER" id="PTHR11442">
    <property type="entry name" value="HEMOGLOBIN FAMILY MEMBER"/>
    <property type="match status" value="1"/>
</dbReference>
<dbReference type="PANTHER" id="PTHR11442:SF7">
    <property type="entry name" value="HEMOGLOBIN SUBUNIT EPSILON"/>
    <property type="match status" value="1"/>
</dbReference>
<dbReference type="Pfam" id="PF00042">
    <property type="entry name" value="Globin"/>
    <property type="match status" value="1"/>
</dbReference>
<dbReference type="PRINTS" id="PR00814">
    <property type="entry name" value="BETAHAEM"/>
</dbReference>
<dbReference type="SUPFAM" id="SSF46458">
    <property type="entry name" value="Globin-like"/>
    <property type="match status" value="1"/>
</dbReference>
<dbReference type="PROSITE" id="PS01033">
    <property type="entry name" value="GLOBIN"/>
    <property type="match status" value="1"/>
</dbReference>
<evidence type="ECO:0000250" key="1">
    <source>
        <dbReference type="UniProtKB" id="P02100"/>
    </source>
</evidence>
<evidence type="ECO:0000255" key="2">
    <source>
        <dbReference type="PROSITE-ProRule" id="PRU00238"/>
    </source>
</evidence>
<feature type="chain" id="PRO_0000053221" description="Hemoglobin subunit epsilon">
    <location>
        <begin position="1"/>
        <end position="147"/>
    </location>
</feature>
<feature type="domain" description="Globin" evidence="2">
    <location>
        <begin position="3"/>
        <end position="147"/>
    </location>
</feature>
<feature type="binding site" description="distal binding residue" evidence="2">
    <location>
        <position position="64"/>
    </location>
    <ligand>
        <name>heme b</name>
        <dbReference type="ChEBI" id="CHEBI:60344"/>
    </ligand>
    <ligandPart>
        <name>Fe</name>
        <dbReference type="ChEBI" id="CHEBI:18248"/>
    </ligandPart>
</feature>
<feature type="binding site" description="proximal binding residue" evidence="2">
    <location>
        <position position="93"/>
    </location>
    <ligand>
        <name>heme b</name>
        <dbReference type="ChEBI" id="CHEBI:60344"/>
    </ligand>
    <ligandPart>
        <name>Fe</name>
        <dbReference type="ChEBI" id="CHEBI:18248"/>
    </ligandPart>
</feature>
<feature type="modified residue" description="Phosphoserine" evidence="1">
    <location>
        <position position="14"/>
    </location>
</feature>
<feature type="modified residue" description="Phosphoserine" evidence="1">
    <location>
        <position position="51"/>
    </location>
</feature>
<proteinExistence type="evidence at transcript level"/>
<protein>
    <recommendedName>
        <fullName>Hemoglobin subunit epsilon</fullName>
    </recommendedName>
    <alternativeName>
        <fullName>Epsilon-globin</fullName>
    </alternativeName>
    <alternativeName>
        <fullName>Hemoglobin epsilon chain</fullName>
    </alternativeName>
</protein>
<keyword id="KW-0349">Heme</keyword>
<keyword id="KW-0408">Iron</keyword>
<keyword id="KW-0479">Metal-binding</keyword>
<keyword id="KW-0561">Oxygen transport</keyword>
<keyword id="KW-0597">Phosphoprotein</keyword>
<keyword id="KW-1185">Reference proteome</keyword>
<keyword id="KW-0813">Transport</keyword>